<comment type="similarity">
    <text evidence="1">Belongs to the bacterial ribosomal protein bS21 family.</text>
</comment>
<organism>
    <name type="scientific">Acinetobacter baumannii (strain AB0057)</name>
    <dbReference type="NCBI Taxonomy" id="480119"/>
    <lineage>
        <taxon>Bacteria</taxon>
        <taxon>Pseudomonadati</taxon>
        <taxon>Pseudomonadota</taxon>
        <taxon>Gammaproteobacteria</taxon>
        <taxon>Moraxellales</taxon>
        <taxon>Moraxellaceae</taxon>
        <taxon>Acinetobacter</taxon>
        <taxon>Acinetobacter calcoaceticus/baumannii complex</taxon>
    </lineage>
</organism>
<protein>
    <recommendedName>
        <fullName evidence="1">Small ribosomal subunit protein bS21</fullName>
    </recommendedName>
    <alternativeName>
        <fullName evidence="2">30S ribosomal protein S21</fullName>
    </alternativeName>
</protein>
<reference key="1">
    <citation type="journal article" date="2008" name="J. Bacteriol.">
        <title>Comparative genome sequence analysis of multidrug-resistant Acinetobacter baumannii.</title>
        <authorList>
            <person name="Adams M.D."/>
            <person name="Goglin K."/>
            <person name="Molyneaux N."/>
            <person name="Hujer K.M."/>
            <person name="Lavender H."/>
            <person name="Jamison J.J."/>
            <person name="MacDonald I.J."/>
            <person name="Martin K.M."/>
            <person name="Russo T."/>
            <person name="Campagnari A.A."/>
            <person name="Hujer A.M."/>
            <person name="Bonomo R.A."/>
            <person name="Gill S.R."/>
        </authorList>
    </citation>
    <scope>NUCLEOTIDE SEQUENCE [LARGE SCALE GENOMIC DNA]</scope>
    <source>
        <strain>AB0057</strain>
    </source>
</reference>
<dbReference type="EMBL" id="CP001182">
    <property type="protein sequence ID" value="ACJ42709.1"/>
    <property type="molecule type" value="Genomic_DNA"/>
</dbReference>
<dbReference type="RefSeq" id="WP_001136722.1">
    <property type="nucleotide sequence ID" value="NC_011586.2"/>
</dbReference>
<dbReference type="PDB" id="7M4U">
    <property type="method" value="EM"/>
    <property type="resolution" value="2.71 A"/>
    <property type="chains" value="u=1-71"/>
</dbReference>
<dbReference type="PDBsum" id="7M4U"/>
<dbReference type="SMR" id="B7I2K7"/>
<dbReference type="IntAct" id="B7I2K7">
    <property type="interactions" value="1"/>
</dbReference>
<dbReference type="GeneID" id="97425938"/>
<dbReference type="KEGG" id="abn:AB57_2601"/>
<dbReference type="HOGENOM" id="CLU_159258_1_0_6"/>
<dbReference type="Proteomes" id="UP000007094">
    <property type="component" value="Chromosome"/>
</dbReference>
<dbReference type="GO" id="GO:1990904">
    <property type="term" value="C:ribonucleoprotein complex"/>
    <property type="evidence" value="ECO:0007669"/>
    <property type="project" value="UniProtKB-KW"/>
</dbReference>
<dbReference type="GO" id="GO:0005840">
    <property type="term" value="C:ribosome"/>
    <property type="evidence" value="ECO:0007669"/>
    <property type="project" value="UniProtKB-KW"/>
</dbReference>
<dbReference type="GO" id="GO:0003735">
    <property type="term" value="F:structural constituent of ribosome"/>
    <property type="evidence" value="ECO:0007669"/>
    <property type="project" value="InterPro"/>
</dbReference>
<dbReference type="GO" id="GO:0006412">
    <property type="term" value="P:translation"/>
    <property type="evidence" value="ECO:0007669"/>
    <property type="project" value="UniProtKB-UniRule"/>
</dbReference>
<dbReference type="Gene3D" id="1.20.5.1150">
    <property type="entry name" value="Ribosomal protein S8"/>
    <property type="match status" value="1"/>
</dbReference>
<dbReference type="HAMAP" id="MF_00358">
    <property type="entry name" value="Ribosomal_bS21"/>
    <property type="match status" value="1"/>
</dbReference>
<dbReference type="InterPro" id="IPR001911">
    <property type="entry name" value="Ribosomal_bS21"/>
</dbReference>
<dbReference type="InterPro" id="IPR018278">
    <property type="entry name" value="Ribosomal_bS21_CS"/>
</dbReference>
<dbReference type="InterPro" id="IPR038380">
    <property type="entry name" value="Ribosomal_bS21_sf"/>
</dbReference>
<dbReference type="NCBIfam" id="TIGR00030">
    <property type="entry name" value="S21p"/>
    <property type="match status" value="1"/>
</dbReference>
<dbReference type="PANTHER" id="PTHR21109">
    <property type="entry name" value="MITOCHONDRIAL 28S RIBOSOMAL PROTEIN S21"/>
    <property type="match status" value="1"/>
</dbReference>
<dbReference type="PANTHER" id="PTHR21109:SF22">
    <property type="entry name" value="SMALL RIBOSOMAL SUBUNIT PROTEIN BS21"/>
    <property type="match status" value="1"/>
</dbReference>
<dbReference type="Pfam" id="PF01165">
    <property type="entry name" value="Ribosomal_S21"/>
    <property type="match status" value="1"/>
</dbReference>
<dbReference type="PRINTS" id="PR00976">
    <property type="entry name" value="RIBOSOMALS21"/>
</dbReference>
<dbReference type="PROSITE" id="PS01181">
    <property type="entry name" value="RIBOSOMAL_S21"/>
    <property type="match status" value="1"/>
</dbReference>
<sequence>MPQVKLKEGEPVDVAIRRFKRSCEKAGVLADVRKREFYEKPTQERKRKKAAAVKRYQKKLARESVRTTRLY</sequence>
<evidence type="ECO:0000255" key="1">
    <source>
        <dbReference type="HAMAP-Rule" id="MF_00358"/>
    </source>
</evidence>
<evidence type="ECO:0000305" key="2"/>
<evidence type="ECO:0007829" key="3">
    <source>
        <dbReference type="PDB" id="7M4U"/>
    </source>
</evidence>
<gene>
    <name evidence="1" type="primary">rpsU</name>
    <name type="ordered locus">AB57_2601</name>
</gene>
<accession>B7I2K7</accession>
<keyword id="KW-0002">3D-structure</keyword>
<keyword id="KW-0687">Ribonucleoprotein</keyword>
<keyword id="KW-0689">Ribosomal protein</keyword>
<feature type="chain" id="PRO_1000120571" description="Small ribosomal subunit protein bS21">
    <location>
        <begin position="1"/>
        <end position="71"/>
    </location>
</feature>
<feature type="helix" evidence="3">
    <location>
        <begin position="12"/>
        <end position="26"/>
    </location>
</feature>
<feature type="helix" evidence="3">
    <location>
        <begin position="28"/>
        <end position="34"/>
    </location>
</feature>
<feature type="helix" evidence="3">
    <location>
        <begin position="41"/>
        <end position="63"/>
    </location>
</feature>
<proteinExistence type="evidence at protein level"/>
<name>RS21_ACIB5</name>